<organism>
    <name type="scientific">Francisella tularensis subsp. holarctica (strain FTNF002-00 / FTA)</name>
    <dbReference type="NCBI Taxonomy" id="458234"/>
    <lineage>
        <taxon>Bacteria</taxon>
        <taxon>Pseudomonadati</taxon>
        <taxon>Pseudomonadota</taxon>
        <taxon>Gammaproteobacteria</taxon>
        <taxon>Thiotrichales</taxon>
        <taxon>Francisellaceae</taxon>
        <taxon>Francisella</taxon>
    </lineage>
</organism>
<comment type="function">
    <text evidence="1">Catalyzes the attachment of isoleucine to tRNA(Ile). As IleRS can inadvertently accommodate and process structurally similar amino acids such as valine, to avoid such errors it has two additional distinct tRNA(Ile)-dependent editing activities. One activity is designated as 'pretransfer' editing and involves the hydrolysis of activated Val-AMP. The other activity is designated 'posttransfer' editing and involves deacylation of mischarged Val-tRNA(Ile).</text>
</comment>
<comment type="catalytic activity">
    <reaction evidence="1">
        <text>tRNA(Ile) + L-isoleucine + ATP = L-isoleucyl-tRNA(Ile) + AMP + diphosphate</text>
        <dbReference type="Rhea" id="RHEA:11060"/>
        <dbReference type="Rhea" id="RHEA-COMP:9666"/>
        <dbReference type="Rhea" id="RHEA-COMP:9695"/>
        <dbReference type="ChEBI" id="CHEBI:30616"/>
        <dbReference type="ChEBI" id="CHEBI:33019"/>
        <dbReference type="ChEBI" id="CHEBI:58045"/>
        <dbReference type="ChEBI" id="CHEBI:78442"/>
        <dbReference type="ChEBI" id="CHEBI:78528"/>
        <dbReference type="ChEBI" id="CHEBI:456215"/>
        <dbReference type="EC" id="6.1.1.5"/>
    </reaction>
</comment>
<comment type="cofactor">
    <cofactor evidence="1">
        <name>Zn(2+)</name>
        <dbReference type="ChEBI" id="CHEBI:29105"/>
    </cofactor>
    <text evidence="1">Binds 1 zinc ion per subunit.</text>
</comment>
<comment type="subunit">
    <text evidence="1">Monomer.</text>
</comment>
<comment type="subcellular location">
    <subcellularLocation>
        <location evidence="1">Cytoplasm</location>
    </subcellularLocation>
</comment>
<comment type="domain">
    <text evidence="1">IleRS has two distinct active sites: one for aminoacylation and one for editing. The misactivated valine is translocated from the active site to the editing site, which sterically excludes the correctly activated isoleucine. The single editing site contains two valyl binding pockets, one specific for each substrate (Val-AMP or Val-tRNA(Ile)).</text>
</comment>
<comment type="similarity">
    <text evidence="1">Belongs to the class-I aminoacyl-tRNA synthetase family. IleS type 1 subfamily.</text>
</comment>
<proteinExistence type="inferred from homology"/>
<reference key="1">
    <citation type="journal article" date="2009" name="PLoS ONE">
        <title>Complete genome sequence of Francisella tularensis subspecies holarctica FTNF002-00.</title>
        <authorList>
            <person name="Barabote R.D."/>
            <person name="Xie G."/>
            <person name="Brettin T.S."/>
            <person name="Hinrichs S.H."/>
            <person name="Fey P.D."/>
            <person name="Jay J.J."/>
            <person name="Engle J.L."/>
            <person name="Godbole S.D."/>
            <person name="Noronha J.M."/>
            <person name="Scheuermann R.H."/>
            <person name="Zhou L.W."/>
            <person name="Lion C."/>
            <person name="Dempsey M.P."/>
        </authorList>
    </citation>
    <scope>NUCLEOTIDE SEQUENCE [LARGE SCALE GENOMIC DNA]</scope>
    <source>
        <strain>FTNF002-00 / FTA</strain>
    </source>
</reference>
<gene>
    <name evidence="1" type="primary">ileS</name>
    <name type="ordered locus">FTA_0458</name>
</gene>
<dbReference type="EC" id="6.1.1.5" evidence="1"/>
<dbReference type="EMBL" id="CP000803">
    <property type="protein sequence ID" value="ABU60935.1"/>
    <property type="molecule type" value="Genomic_DNA"/>
</dbReference>
<dbReference type="RefSeq" id="WP_011457376.1">
    <property type="nucleotide sequence ID" value="NC_009749.1"/>
</dbReference>
<dbReference type="SMR" id="A7NAD2"/>
<dbReference type="KEGG" id="fta:FTA_0458"/>
<dbReference type="HOGENOM" id="CLU_001493_7_1_6"/>
<dbReference type="GO" id="GO:0005829">
    <property type="term" value="C:cytosol"/>
    <property type="evidence" value="ECO:0007669"/>
    <property type="project" value="TreeGrafter"/>
</dbReference>
<dbReference type="GO" id="GO:0002161">
    <property type="term" value="F:aminoacyl-tRNA deacylase activity"/>
    <property type="evidence" value="ECO:0007669"/>
    <property type="project" value="InterPro"/>
</dbReference>
<dbReference type="GO" id="GO:0005524">
    <property type="term" value="F:ATP binding"/>
    <property type="evidence" value="ECO:0007669"/>
    <property type="project" value="UniProtKB-UniRule"/>
</dbReference>
<dbReference type="GO" id="GO:0004822">
    <property type="term" value="F:isoleucine-tRNA ligase activity"/>
    <property type="evidence" value="ECO:0007669"/>
    <property type="project" value="UniProtKB-UniRule"/>
</dbReference>
<dbReference type="GO" id="GO:0000049">
    <property type="term" value="F:tRNA binding"/>
    <property type="evidence" value="ECO:0007669"/>
    <property type="project" value="InterPro"/>
</dbReference>
<dbReference type="GO" id="GO:0008270">
    <property type="term" value="F:zinc ion binding"/>
    <property type="evidence" value="ECO:0007669"/>
    <property type="project" value="UniProtKB-UniRule"/>
</dbReference>
<dbReference type="GO" id="GO:0006428">
    <property type="term" value="P:isoleucyl-tRNA aminoacylation"/>
    <property type="evidence" value="ECO:0007669"/>
    <property type="project" value="UniProtKB-UniRule"/>
</dbReference>
<dbReference type="CDD" id="cd07960">
    <property type="entry name" value="Anticodon_Ia_Ile_BEm"/>
    <property type="match status" value="1"/>
</dbReference>
<dbReference type="CDD" id="cd00818">
    <property type="entry name" value="IleRS_core"/>
    <property type="match status" value="1"/>
</dbReference>
<dbReference type="FunFam" id="1.10.730.20:FF:000001">
    <property type="entry name" value="Isoleucine--tRNA ligase"/>
    <property type="match status" value="1"/>
</dbReference>
<dbReference type="FunFam" id="3.40.50.620:FF:000042">
    <property type="entry name" value="Isoleucine--tRNA ligase"/>
    <property type="match status" value="1"/>
</dbReference>
<dbReference type="FunFam" id="3.40.50.620:FF:000048">
    <property type="entry name" value="Isoleucine--tRNA ligase"/>
    <property type="match status" value="1"/>
</dbReference>
<dbReference type="Gene3D" id="1.10.730.20">
    <property type="match status" value="1"/>
</dbReference>
<dbReference type="Gene3D" id="3.40.50.620">
    <property type="entry name" value="HUPs"/>
    <property type="match status" value="2"/>
</dbReference>
<dbReference type="Gene3D" id="3.90.740.10">
    <property type="entry name" value="Valyl/Leucyl/Isoleucyl-tRNA synthetase, editing domain"/>
    <property type="match status" value="1"/>
</dbReference>
<dbReference type="HAMAP" id="MF_02002">
    <property type="entry name" value="Ile_tRNA_synth_type1"/>
    <property type="match status" value="1"/>
</dbReference>
<dbReference type="InterPro" id="IPR001412">
    <property type="entry name" value="aa-tRNA-synth_I_CS"/>
</dbReference>
<dbReference type="InterPro" id="IPR002300">
    <property type="entry name" value="aa-tRNA-synth_Ia"/>
</dbReference>
<dbReference type="InterPro" id="IPR033708">
    <property type="entry name" value="Anticodon_Ile_BEm"/>
</dbReference>
<dbReference type="InterPro" id="IPR002301">
    <property type="entry name" value="Ile-tRNA-ligase"/>
</dbReference>
<dbReference type="InterPro" id="IPR023585">
    <property type="entry name" value="Ile-tRNA-ligase_type1"/>
</dbReference>
<dbReference type="InterPro" id="IPR050081">
    <property type="entry name" value="Ile-tRNA_ligase"/>
</dbReference>
<dbReference type="InterPro" id="IPR013155">
    <property type="entry name" value="M/V/L/I-tRNA-synth_anticd-bd"/>
</dbReference>
<dbReference type="InterPro" id="IPR014729">
    <property type="entry name" value="Rossmann-like_a/b/a_fold"/>
</dbReference>
<dbReference type="InterPro" id="IPR009080">
    <property type="entry name" value="tRNAsynth_Ia_anticodon-bd"/>
</dbReference>
<dbReference type="InterPro" id="IPR009008">
    <property type="entry name" value="Val/Leu/Ile-tRNA-synth_edit"/>
</dbReference>
<dbReference type="InterPro" id="IPR010663">
    <property type="entry name" value="Znf_FPG/IleRS"/>
</dbReference>
<dbReference type="NCBIfam" id="TIGR00392">
    <property type="entry name" value="ileS"/>
    <property type="match status" value="1"/>
</dbReference>
<dbReference type="PANTHER" id="PTHR42765:SF1">
    <property type="entry name" value="ISOLEUCINE--TRNA LIGASE, MITOCHONDRIAL"/>
    <property type="match status" value="1"/>
</dbReference>
<dbReference type="PANTHER" id="PTHR42765">
    <property type="entry name" value="SOLEUCYL-TRNA SYNTHETASE"/>
    <property type="match status" value="1"/>
</dbReference>
<dbReference type="Pfam" id="PF08264">
    <property type="entry name" value="Anticodon_1"/>
    <property type="match status" value="1"/>
</dbReference>
<dbReference type="Pfam" id="PF00133">
    <property type="entry name" value="tRNA-synt_1"/>
    <property type="match status" value="1"/>
</dbReference>
<dbReference type="Pfam" id="PF06827">
    <property type="entry name" value="zf-FPG_IleRS"/>
    <property type="match status" value="1"/>
</dbReference>
<dbReference type="PRINTS" id="PR00984">
    <property type="entry name" value="TRNASYNTHILE"/>
</dbReference>
<dbReference type="SUPFAM" id="SSF47323">
    <property type="entry name" value="Anticodon-binding domain of a subclass of class I aminoacyl-tRNA synthetases"/>
    <property type="match status" value="1"/>
</dbReference>
<dbReference type="SUPFAM" id="SSF52374">
    <property type="entry name" value="Nucleotidylyl transferase"/>
    <property type="match status" value="1"/>
</dbReference>
<dbReference type="SUPFAM" id="SSF50677">
    <property type="entry name" value="ValRS/IleRS/LeuRS editing domain"/>
    <property type="match status" value="1"/>
</dbReference>
<dbReference type="PROSITE" id="PS00178">
    <property type="entry name" value="AA_TRNA_LIGASE_I"/>
    <property type="match status" value="1"/>
</dbReference>
<sequence>MSDYKDTLNLPKTSFSMKGNLANKEPMILNKWEKQGIYKKIREHFAGREKFVLHDGPPYANGSIHVGHAVNKILKDIIIKSKTLSGYDAPFTPTWDCHGLPIELQVEKKHGKAGQSISEDDFRKECRKYAKKQVEIQKKDFKRLGVLGDWEQPYLTMNFDYEANMIRTLAKIIENGHLSKGFKPVHWCTDCGSALAEAEVEYADKVSPAIDVKFKIKDKDKLAQAFGLDSLNHDAFAIIWTTTPWTLPANQAIAVNNQLNYSLIKIEDFYIILAENLVEQTLKRYAIENAQIIATTTGNKLTGIIAEHPFYSRHVPILHGDHVTDDSGTGLVHTAPTHGVDDFTLGKEHNLSMEIFVKGNGCYSENTKLFAGEFIFKASDRIIELLGEKKRLMNSDKIKHSYPHCWRHKTPLMFRATPQWFISMEKQGLRDKALQTIKETSWAPSWGQARIEGMVKDRPDWCISRQRTWGVPLPLFIHKETEELHPNTIEILHKVAEKIEKDGIEAWFNADDCEFITETAQYKSVKDTLDVWFDSGSSSMCILDLDKRLSYPADLYLEGSDQHRGWFQTSLLVAMSAKGSQPYKEVFTHGFVVDEHGRKMSKSLGNVTSPQDIYNTLGADILRLWTASTDYKSEMAVSDQILKRTADTYRRLRNTARFLLSNLDGFNPVTDIIEFDKLVKLDQWAIAKTKEFQDKIIEAYDKYQTHTVAQLIHHFCSIEMGSFYLDIIKDRQYTAKTDGHPRKSAQTAIYHIVHALVRWMAPILSFTADEIWDATPKTTDLPIQLCEWYTGLKSFDQDAELDLEYWAKIQEIRSEVNRVLEIKRNEDVIKASLEAEITIYADKYNYKLLEKLGNELRFLLISSKADLKVIEESTSSSIAANILGLLIEITKIEEPKCERCWHRSSTVGDNPQYKDICSRCVENITTEAGESREFA</sequence>
<name>SYI_FRATF</name>
<evidence type="ECO:0000255" key="1">
    <source>
        <dbReference type="HAMAP-Rule" id="MF_02002"/>
    </source>
</evidence>
<keyword id="KW-0030">Aminoacyl-tRNA synthetase</keyword>
<keyword id="KW-0067">ATP-binding</keyword>
<keyword id="KW-0963">Cytoplasm</keyword>
<keyword id="KW-0436">Ligase</keyword>
<keyword id="KW-0479">Metal-binding</keyword>
<keyword id="KW-0547">Nucleotide-binding</keyword>
<keyword id="KW-0648">Protein biosynthesis</keyword>
<keyword id="KW-0862">Zinc</keyword>
<accession>A7NAD2</accession>
<feature type="chain" id="PRO_1000022066" description="Isoleucine--tRNA ligase">
    <location>
        <begin position="1"/>
        <end position="935"/>
    </location>
</feature>
<feature type="short sequence motif" description="'HIGH' region">
    <location>
        <begin position="58"/>
        <end position="68"/>
    </location>
</feature>
<feature type="short sequence motif" description="'KMSKS' region">
    <location>
        <begin position="599"/>
        <end position="603"/>
    </location>
</feature>
<feature type="binding site" evidence="1">
    <location>
        <position position="558"/>
    </location>
    <ligand>
        <name>L-isoleucyl-5'-AMP</name>
        <dbReference type="ChEBI" id="CHEBI:178002"/>
    </ligand>
</feature>
<feature type="binding site" evidence="1">
    <location>
        <position position="602"/>
    </location>
    <ligand>
        <name>ATP</name>
        <dbReference type="ChEBI" id="CHEBI:30616"/>
    </ligand>
</feature>
<feature type="binding site" evidence="1">
    <location>
        <position position="897"/>
    </location>
    <ligand>
        <name>Zn(2+)</name>
        <dbReference type="ChEBI" id="CHEBI:29105"/>
    </ligand>
</feature>
<feature type="binding site" evidence="1">
    <location>
        <position position="900"/>
    </location>
    <ligand>
        <name>Zn(2+)</name>
        <dbReference type="ChEBI" id="CHEBI:29105"/>
    </ligand>
</feature>
<feature type="binding site" evidence="1">
    <location>
        <position position="917"/>
    </location>
    <ligand>
        <name>Zn(2+)</name>
        <dbReference type="ChEBI" id="CHEBI:29105"/>
    </ligand>
</feature>
<feature type="binding site" evidence="1">
    <location>
        <position position="920"/>
    </location>
    <ligand>
        <name>Zn(2+)</name>
        <dbReference type="ChEBI" id="CHEBI:29105"/>
    </ligand>
</feature>
<protein>
    <recommendedName>
        <fullName evidence="1">Isoleucine--tRNA ligase</fullName>
        <ecNumber evidence="1">6.1.1.5</ecNumber>
    </recommendedName>
    <alternativeName>
        <fullName evidence="1">Isoleucyl-tRNA synthetase</fullName>
        <shortName evidence="1">IleRS</shortName>
    </alternativeName>
</protein>